<feature type="signal peptide" evidence="2">
    <location>
        <begin position="1"/>
        <end position="23"/>
    </location>
</feature>
<feature type="chain" id="PRO_0000253997" description="Putative serine/threonine-protein kinase/receptor R826">
    <location>
        <begin position="24"/>
        <end position="1657"/>
    </location>
</feature>
<feature type="transmembrane region" description="Helical" evidence="2">
    <location>
        <begin position="742"/>
        <end position="762"/>
    </location>
</feature>
<feature type="domain" description="Protein kinase 1" evidence="4">
    <location>
        <begin position="786"/>
        <end position="1049"/>
    </location>
</feature>
<feature type="domain" description="Guanylate cyclase" evidence="3">
    <location>
        <begin position="1134"/>
        <end position="1277"/>
    </location>
</feature>
<feature type="domain" description="Protein kinase 2" evidence="4">
    <location>
        <begin position="1399"/>
        <end position="1651"/>
    </location>
</feature>
<feature type="region of interest" description="Disordered" evidence="5">
    <location>
        <begin position="1089"/>
        <end position="1115"/>
    </location>
</feature>
<feature type="active site" description="Proton acceptor" evidence="1">
    <location>
        <position position="909"/>
    </location>
</feature>
<feature type="active site" description="Proton acceptor" evidence="1">
    <location>
        <position position="1522"/>
    </location>
</feature>
<feature type="binding site" evidence="4">
    <location>
        <begin position="792"/>
        <end position="800"/>
    </location>
    <ligand>
        <name>ATP</name>
        <dbReference type="ChEBI" id="CHEBI:30616"/>
    </ligand>
</feature>
<feature type="binding site" evidence="4">
    <location>
        <position position="813"/>
    </location>
    <ligand>
        <name>ATP</name>
        <dbReference type="ChEBI" id="CHEBI:30616"/>
    </ligand>
</feature>
<feature type="binding site" evidence="4">
    <location>
        <begin position="1405"/>
        <end position="1413"/>
    </location>
    <ligand>
        <name>ATP</name>
        <dbReference type="ChEBI" id="CHEBI:30616"/>
    </ligand>
</feature>
<feature type="binding site" evidence="4">
    <location>
        <position position="1426"/>
    </location>
    <ligand>
        <name>ATP</name>
        <dbReference type="ChEBI" id="CHEBI:30616"/>
    </ligand>
</feature>
<feature type="glycosylation site" description="N-linked (GlcNAc...) asparagine; by host" evidence="2">
    <location>
        <position position="153"/>
    </location>
</feature>
<feature type="glycosylation site" description="N-linked (GlcNAc...) asparagine; by host" evidence="2">
    <location>
        <position position="178"/>
    </location>
</feature>
<feature type="glycosylation site" description="N-linked (GlcNAc...) asparagine; by host" evidence="2">
    <location>
        <position position="238"/>
    </location>
</feature>
<feature type="glycosylation site" description="N-linked (GlcNAc...) asparagine; by host" evidence="2">
    <location>
        <position position="255"/>
    </location>
</feature>
<feature type="glycosylation site" description="N-linked (GlcNAc...) asparagine; by host" evidence="2">
    <location>
        <position position="352"/>
    </location>
</feature>
<feature type="glycosylation site" description="N-linked (GlcNAc...) asparagine; by host" evidence="2">
    <location>
        <position position="454"/>
    </location>
</feature>
<feature type="glycosylation site" description="N-linked (GlcNAc...) asparagine; by host" evidence="2">
    <location>
        <position position="476"/>
    </location>
</feature>
<feature type="glycosylation site" description="N-linked (GlcNAc...) asparagine; by host" evidence="2">
    <location>
        <position position="494"/>
    </location>
</feature>
<feature type="glycosylation site" description="N-linked (GlcNAc...) asparagine; by host" evidence="2">
    <location>
        <position position="596"/>
    </location>
</feature>
<name>YR826_MIMIV</name>
<keyword id="KW-0067">ATP-binding</keyword>
<keyword id="KW-0325">Glycoprotein</keyword>
<keyword id="KW-0418">Kinase</keyword>
<keyword id="KW-0472">Membrane</keyword>
<keyword id="KW-0547">Nucleotide-binding</keyword>
<keyword id="KW-0675">Receptor</keyword>
<keyword id="KW-1185">Reference proteome</keyword>
<keyword id="KW-0677">Repeat</keyword>
<keyword id="KW-0723">Serine/threonine-protein kinase</keyword>
<keyword id="KW-0732">Signal</keyword>
<keyword id="KW-0808">Transferase</keyword>
<keyword id="KW-0812">Transmembrane</keyword>
<keyword id="KW-1133">Transmembrane helix</keyword>
<reference key="1">
    <citation type="journal article" date="2004" name="Science">
        <title>The 1.2-megabase genome sequence of Mimivirus.</title>
        <authorList>
            <person name="Raoult D."/>
            <person name="Audic S."/>
            <person name="Robert C."/>
            <person name="Abergel C."/>
            <person name="Renesto P."/>
            <person name="Ogata H."/>
            <person name="La Scola B."/>
            <person name="Susan M."/>
            <person name="Claverie J.-M."/>
        </authorList>
    </citation>
    <scope>NUCLEOTIDE SEQUENCE [LARGE SCALE GENOMIC DNA]</scope>
    <source>
        <strain>Rowbotham-Bradford</strain>
    </source>
</reference>
<protein>
    <recommendedName>
        <fullName>Putative serine/threonine-protein kinase/receptor R826</fullName>
        <ecNumber>2.7.11.1</ecNumber>
    </recommendedName>
</protein>
<proteinExistence type="inferred from homology"/>
<accession>Q7T6X2</accession>
<evidence type="ECO:0000250" key="1"/>
<evidence type="ECO:0000255" key="2"/>
<evidence type="ECO:0000255" key="3">
    <source>
        <dbReference type="PROSITE-ProRule" id="PRU00099"/>
    </source>
</evidence>
<evidence type="ECO:0000255" key="4">
    <source>
        <dbReference type="PROSITE-ProRule" id="PRU00159"/>
    </source>
</evidence>
<evidence type="ECO:0000256" key="5">
    <source>
        <dbReference type="SAM" id="MobiDB-lite"/>
    </source>
</evidence>
<evidence type="ECO:0000305" key="6"/>
<dbReference type="EC" id="2.7.11.1"/>
<dbReference type="EMBL" id="AY653733">
    <property type="protein sequence ID" value="AAQ09588.2"/>
    <property type="molecule type" value="Genomic_DNA"/>
</dbReference>
<dbReference type="SMR" id="Q7T6X2"/>
<dbReference type="KEGG" id="vg:9925489"/>
<dbReference type="Proteomes" id="UP000001134">
    <property type="component" value="Genome"/>
</dbReference>
<dbReference type="GO" id="GO:0016020">
    <property type="term" value="C:membrane"/>
    <property type="evidence" value="ECO:0007669"/>
    <property type="project" value="UniProtKB-SubCell"/>
</dbReference>
<dbReference type="GO" id="GO:0005524">
    <property type="term" value="F:ATP binding"/>
    <property type="evidence" value="ECO:0007669"/>
    <property type="project" value="UniProtKB-KW"/>
</dbReference>
<dbReference type="GO" id="GO:0106310">
    <property type="term" value="F:protein serine kinase activity"/>
    <property type="evidence" value="ECO:0007669"/>
    <property type="project" value="RHEA"/>
</dbReference>
<dbReference type="GO" id="GO:0004674">
    <property type="term" value="F:protein serine/threonine kinase activity"/>
    <property type="evidence" value="ECO:0007669"/>
    <property type="project" value="UniProtKB-KW"/>
</dbReference>
<dbReference type="GO" id="GO:0009190">
    <property type="term" value="P:cyclic nucleotide biosynthetic process"/>
    <property type="evidence" value="ECO:0007669"/>
    <property type="project" value="InterPro"/>
</dbReference>
<dbReference type="GO" id="GO:0035556">
    <property type="term" value="P:intracellular signal transduction"/>
    <property type="evidence" value="ECO:0007669"/>
    <property type="project" value="InterPro"/>
</dbReference>
<dbReference type="CDD" id="cd13999">
    <property type="entry name" value="STKc_MAP3K-like"/>
    <property type="match status" value="2"/>
</dbReference>
<dbReference type="FunFam" id="3.30.200.20:FF:000060">
    <property type="entry name" value="Serine/threonine-protein kinase isoform 1"/>
    <property type="match status" value="1"/>
</dbReference>
<dbReference type="Gene3D" id="3.30.70.1230">
    <property type="entry name" value="Nucleotide cyclase"/>
    <property type="match status" value="1"/>
</dbReference>
<dbReference type="Gene3D" id="3.40.190.10">
    <property type="entry name" value="Periplasmic binding protein-like II"/>
    <property type="match status" value="4"/>
</dbReference>
<dbReference type="Gene3D" id="3.30.200.20">
    <property type="entry name" value="Phosphorylase Kinase, domain 1"/>
    <property type="match status" value="2"/>
</dbReference>
<dbReference type="Gene3D" id="1.10.510.10">
    <property type="entry name" value="Transferase(Phosphotransferase) domain 1"/>
    <property type="match status" value="2"/>
</dbReference>
<dbReference type="InterPro" id="IPR001054">
    <property type="entry name" value="A/G_cyclase"/>
</dbReference>
<dbReference type="InterPro" id="IPR011009">
    <property type="entry name" value="Kinase-like_dom_sf"/>
</dbReference>
<dbReference type="InterPro" id="IPR029787">
    <property type="entry name" value="Nucleotide_cyclase"/>
</dbReference>
<dbReference type="InterPro" id="IPR024370">
    <property type="entry name" value="PBP_domain"/>
</dbReference>
<dbReference type="InterPro" id="IPR000719">
    <property type="entry name" value="Prot_kinase_dom"/>
</dbReference>
<dbReference type="InterPro" id="IPR017441">
    <property type="entry name" value="Protein_kinase_ATP_BS"/>
</dbReference>
<dbReference type="InterPro" id="IPR001245">
    <property type="entry name" value="Ser-Thr/Tyr_kinase_cat_dom"/>
</dbReference>
<dbReference type="InterPro" id="IPR008271">
    <property type="entry name" value="Ser/Thr_kinase_AS"/>
</dbReference>
<dbReference type="InterPro" id="IPR051681">
    <property type="entry name" value="Ser/Thr_Kinases-Pseudokinases"/>
</dbReference>
<dbReference type="PANTHER" id="PTHR44329:SF298">
    <property type="entry name" value="MIXED LINEAGE KINASE DOMAIN-LIKE PROTEIN"/>
    <property type="match status" value="1"/>
</dbReference>
<dbReference type="PANTHER" id="PTHR44329">
    <property type="entry name" value="SERINE/THREONINE-PROTEIN KINASE TNNI3K-RELATED"/>
    <property type="match status" value="1"/>
</dbReference>
<dbReference type="Pfam" id="PF00211">
    <property type="entry name" value="Guanylate_cyc"/>
    <property type="match status" value="1"/>
</dbReference>
<dbReference type="Pfam" id="PF12849">
    <property type="entry name" value="PBP_like_2"/>
    <property type="match status" value="1"/>
</dbReference>
<dbReference type="Pfam" id="PF07714">
    <property type="entry name" value="PK_Tyr_Ser-Thr"/>
    <property type="match status" value="2"/>
</dbReference>
<dbReference type="PRINTS" id="PR00109">
    <property type="entry name" value="TYRKINASE"/>
</dbReference>
<dbReference type="SMART" id="SM00044">
    <property type="entry name" value="CYCc"/>
    <property type="match status" value="1"/>
</dbReference>
<dbReference type="SMART" id="SM00220">
    <property type="entry name" value="S_TKc"/>
    <property type="match status" value="2"/>
</dbReference>
<dbReference type="SUPFAM" id="SSF55073">
    <property type="entry name" value="Nucleotide cyclase"/>
    <property type="match status" value="1"/>
</dbReference>
<dbReference type="SUPFAM" id="SSF53850">
    <property type="entry name" value="Periplasmic binding protein-like II"/>
    <property type="match status" value="2"/>
</dbReference>
<dbReference type="SUPFAM" id="SSF56112">
    <property type="entry name" value="Protein kinase-like (PK-like)"/>
    <property type="match status" value="2"/>
</dbReference>
<dbReference type="PROSITE" id="PS50125">
    <property type="entry name" value="GUANYLATE_CYCLASE_2"/>
    <property type="match status" value="1"/>
</dbReference>
<dbReference type="PROSITE" id="PS00107">
    <property type="entry name" value="PROTEIN_KINASE_ATP"/>
    <property type="match status" value="2"/>
</dbReference>
<dbReference type="PROSITE" id="PS50011">
    <property type="entry name" value="PROTEIN_KINASE_DOM"/>
    <property type="match status" value="2"/>
</dbReference>
<dbReference type="PROSITE" id="PS00108">
    <property type="entry name" value="PROTEIN_KINASE_ST"/>
    <property type="match status" value="2"/>
</dbReference>
<sequence>MRLNSQIVFCIVVVISCLSMIECKMGSRIYCSGSLSSVELFSQYISNYALRNDDVTIIYAGMSVDEINADVYIADCSAYDRAIPQIYMISYGLIQFPIVGQAIVIIYNVPGLSSHNMIIDRETLGRIWTGNIRKWNDIQIQNLNPDIASQLPNETITLGYNDAYYLSISEIMQLALRNFSEEFANAHTIAGGKFGNMIPAKQGYAIDAGEASESRIDWVKNTPFSLSFADFATVYPRNVSYMHMYNKAGKLVEPNITTVQSAMADFKEIYTTNDFTIDIFDASGENSWPISWVNYISMTSTFQQADCIRTKELLDFIAWFYMNNEIAEIIKEYQYYPLDNTIKKIAIDNMYNVTCNGKVSQEHQYLIAFGSPLSIMASWPNTWASSMTTVKYYASLSDQAIELQKTFSGDFGITIKDFDKNKYLSSTMEDIGVSHLAAFNIVPAYNIPEFIGLNETLVLNYETIVDIYLGLVTNWNDSSIRNSNNPYINSLLPNKTITVVVQKVESDVNELFTNFLSCKSDKFNNAIGPTNLPEFDFVSNNVVYTEDVYGVGNTLVSTDYSFAFWPEPGIRLLSHMAIVQAASIQTSTGTIIKPTNETLSKAVDNKINSINRRDIEDGSWPFIAMMSLVYHQKTMQSFSKASALADFIYWTQFDDTAASIADTQGYYVASIHPTILRENLELLQSFTFEDRTVSKVANCIFEGTICYNKGTCNNNVCLCNIDREGQFCELEKTQSDTNIVTIILAVVIPIAFIIVCIICILVVALIFSLRFRKGISDDWEIDFHELELGEQLGTGAFGEVHKGTWRGTEVAVKMISPDKTITKDIERNFKDEVRVMTTLRHPNVVLFMAASTKPPKMCIVMEFMALGSLHDLLKNELIPDIPFALKVKIAYQASKGMHFLHSSGITHRDLKSLNLLLDIKWNVKVSDFGLTKFKSDVKSINPEKFAGTIQWTAPEILSEDREVDYILSDVYSFGIIMWELITRDQPYFGMSPAAIAVSVIRDNYRPVISDQLRSEVAPEYIELLTSCWHFDPTIRPTFLEIMTRLSNLMGDSGMTGMSSSSSNSSKFDYNSFGKVQQFAINRTDPDGIVQNSYNRTDSYDLGSNNSHSSITSDTNKSNKYLRQTNIQHPTGEVVVVFTDIISAAQLWEFDASEMKNATILYNKLVRSICNECGGYESLISKERNSGEGSFCLIFSDVQNAITFCEELQKQLVGVNWSPKLLEHPITAIEKDINGTIIYAGLRVRIGLHFGSTKINYDPISRKYEYIGPTVTTAAAVTTITHGGQIIMTEDVANKLSTENSNKPVCLGRVDIDGIPDSLVLYEYVISALIGRFFGGVTRKNASFVSNETSTDYDDMDTDNSTFSARVPHQAYQYHAAIENNERYLTSAGLCSWVINYDEIKMGEQIGLGSYGVVYRGKWKNVDVAIKKFIKQKIDENHLLGIREEIAFLKKLHHPNIITMVGASLKKPNICIVTEYMAKGNLRDAMRTCTPKLEWHQKIKILVNIAKGISYLHSFDPPIIHRDIKPSNILIDENWNVKIADFGFARIKEENAIMTRCGTPCWTAPEIIRNDIYDEKVDVFSFGIVMWEVLTCKEPFIGANFMKITMDILEDVRPKIPQDCPEEFAKLMRKCWHAKSTKRPTMDDVIIVLAKFCPDISV</sequence>
<gene>
    <name type="ordered locus">MIMI_R826</name>
</gene>
<comment type="catalytic activity">
    <reaction>
        <text>L-seryl-[protein] + ATP = O-phospho-L-seryl-[protein] + ADP + H(+)</text>
        <dbReference type="Rhea" id="RHEA:17989"/>
        <dbReference type="Rhea" id="RHEA-COMP:9863"/>
        <dbReference type="Rhea" id="RHEA-COMP:11604"/>
        <dbReference type="ChEBI" id="CHEBI:15378"/>
        <dbReference type="ChEBI" id="CHEBI:29999"/>
        <dbReference type="ChEBI" id="CHEBI:30616"/>
        <dbReference type="ChEBI" id="CHEBI:83421"/>
        <dbReference type="ChEBI" id="CHEBI:456216"/>
        <dbReference type="EC" id="2.7.11.1"/>
    </reaction>
</comment>
<comment type="catalytic activity">
    <reaction>
        <text>L-threonyl-[protein] + ATP = O-phospho-L-threonyl-[protein] + ADP + H(+)</text>
        <dbReference type="Rhea" id="RHEA:46608"/>
        <dbReference type="Rhea" id="RHEA-COMP:11060"/>
        <dbReference type="Rhea" id="RHEA-COMP:11605"/>
        <dbReference type="ChEBI" id="CHEBI:15378"/>
        <dbReference type="ChEBI" id="CHEBI:30013"/>
        <dbReference type="ChEBI" id="CHEBI:30616"/>
        <dbReference type="ChEBI" id="CHEBI:61977"/>
        <dbReference type="ChEBI" id="CHEBI:456216"/>
        <dbReference type="EC" id="2.7.11.1"/>
    </reaction>
</comment>
<comment type="subcellular location">
    <subcellularLocation>
        <location evidence="6">Membrane</location>
        <topology evidence="6">Single-pass type I membrane protein</topology>
    </subcellularLocation>
</comment>
<organism>
    <name type="scientific">Acanthamoeba polyphaga mimivirus</name>
    <name type="common">APMV</name>
    <dbReference type="NCBI Taxonomy" id="212035"/>
    <lineage>
        <taxon>Viruses</taxon>
        <taxon>Varidnaviria</taxon>
        <taxon>Bamfordvirae</taxon>
        <taxon>Nucleocytoviricota</taxon>
        <taxon>Megaviricetes</taxon>
        <taxon>Imitervirales</taxon>
        <taxon>Mimiviridae</taxon>
        <taxon>Megamimivirinae</taxon>
        <taxon>Mimivirus</taxon>
        <taxon>Mimivirus bradfordmassiliense</taxon>
    </lineage>
</organism>
<organismHost>
    <name type="scientific">Acanthamoeba polyphaga</name>
    <name type="common">Amoeba</name>
    <dbReference type="NCBI Taxonomy" id="5757"/>
</organismHost>